<feature type="signal peptide" evidence="2">
    <location>
        <begin position="1"/>
        <end position="21"/>
    </location>
</feature>
<feature type="propeptide" id="PRO_0000026847" evidence="2">
    <location>
        <begin position="22"/>
        <end position="56"/>
    </location>
</feature>
<feature type="chain" id="PRO_0000026848" description="Aminopeptidase Y">
    <location>
        <begin position="57"/>
        <end position="537"/>
    </location>
</feature>
<feature type="active site" description="Proton acceptor" evidence="1">
    <location>
        <position position="358"/>
    </location>
</feature>
<feature type="binding site" evidence="1">
    <location>
        <position position="314"/>
    </location>
    <ligand>
        <name>Zn(2+)</name>
        <dbReference type="ChEBI" id="CHEBI:29105"/>
        <label>1</label>
        <note>catalytic</note>
    </ligand>
</feature>
<feature type="binding site" evidence="1">
    <location>
        <position position="326"/>
    </location>
    <ligand>
        <name>Zn(2+)</name>
        <dbReference type="ChEBI" id="CHEBI:29105"/>
        <label>1</label>
        <note>catalytic</note>
    </ligand>
</feature>
<feature type="binding site" evidence="1">
    <location>
        <position position="326"/>
    </location>
    <ligand>
        <name>Zn(2+)</name>
        <dbReference type="ChEBI" id="CHEBI:29105"/>
        <label>2</label>
        <note>catalytic</note>
    </ligand>
</feature>
<feature type="binding site" evidence="1">
    <location>
        <position position="359"/>
    </location>
    <ligand>
        <name>Zn(2+)</name>
        <dbReference type="ChEBI" id="CHEBI:29105"/>
        <label>2</label>
        <note>catalytic</note>
    </ligand>
</feature>
<feature type="binding site" evidence="1">
    <location>
        <position position="387"/>
    </location>
    <ligand>
        <name>Zn(2+)</name>
        <dbReference type="ChEBI" id="CHEBI:29105"/>
        <label>1</label>
        <note>catalytic</note>
    </ligand>
</feature>
<feature type="binding site" evidence="1">
    <location>
        <position position="472"/>
    </location>
    <ligand>
        <name>Zn(2+)</name>
        <dbReference type="ChEBI" id="CHEBI:29105"/>
        <label>2</label>
        <note>catalytic</note>
    </ligand>
</feature>
<feature type="site" description="Transition state stabilizer" evidence="1">
    <location>
        <position position="471"/>
    </location>
</feature>
<feature type="glycosylation site" description="N-linked (GlcNAc...) asparagine" evidence="2">
    <location>
        <position position="85"/>
    </location>
</feature>
<feature type="glycosylation site" description="N-linked (GlcNAc...) asparagine" evidence="2">
    <location>
        <position position="96"/>
    </location>
</feature>
<feature type="glycosylation site" description="N-linked (GlcNAc...) asparagine" evidence="2">
    <location>
        <position position="115"/>
    </location>
</feature>
<feature type="glycosylation site" description="N-linked (GlcNAc...) asparagine" evidence="2">
    <location>
        <position position="150"/>
    </location>
</feature>
<feature type="glycosylation site" description="N-linked (GlcNAc...) asparagine" evidence="2">
    <location>
        <position position="162"/>
    </location>
</feature>
<feature type="glycosylation site" description="N-linked (GlcNAc...) asparagine" evidence="2">
    <location>
        <position position="371"/>
    </location>
</feature>
<feature type="glycosylation site" description="N-linked (GlcNAc...) asparagine" evidence="2">
    <location>
        <position position="427"/>
    </location>
</feature>
<feature type="glycosylation site" description="N-linked (GlcNAc...) asparagine" evidence="2">
    <location>
        <position position="480"/>
    </location>
</feature>
<feature type="sequence conflict" description="In Ref. 2." evidence="4" ref="2">
    <original>YA</original>
    <variation>LR</variation>
    <location>
        <begin position="14"/>
        <end position="15"/>
    </location>
</feature>
<evidence type="ECO:0000250" key="1">
    <source>
        <dbReference type="UniProtKB" id="P80561"/>
    </source>
</evidence>
<evidence type="ECO:0000255" key="2"/>
<evidence type="ECO:0000269" key="3">
    <source>
    </source>
</evidence>
<evidence type="ECO:0000305" key="4"/>
<sequence>MHFSLKQLAVAAFYATNLGSAYVIPQFFQEAFQQEEPIENYLPQLNDDDSSAVAANIPKPHIPYFMKPHVESEKLQDKIKVDDLNATAWDLYRLANYSTPDYGHPTRVIGSKGHNKTMEYILNVFDDMQDYYDVSLQEFEALSGKIISFNLSDAETGKSFANTTAFALSPPVDGFVGKLVEIPNLGCEEKDYASVVPPRHNEKQIALIERGKCPFGDKSNLAGKFGFTAVVIYDNEPKSKEGLHGTLGEPTKHTVATVGVPYKVGKKLIANIALNIDYSLYFAMDSYVEFIKTQNIIADTKHGDPDNIVALGAHSDSVEEGPGINDDGSGTISLLNVAKQLTHFKINNKVRFAWWAAEEEGLLGSNFYAYNLTKEENSKIRVFMDYDMMASPNYEYEIYDANNKENPKGSEELKNLYVDYYKAHHLNYTLVPFDGRSDYVGFINNGIPAGGIATGAEKNNVNNGKVLDRCYHQLCDDVSNLSWDAFITNTKLIAHSVATYADSFEGFPKRETQKHKEVDILNAQQPQFKYRADFLII</sequence>
<proteinExistence type="evidence at protein level"/>
<keyword id="KW-0031">Aminopeptidase</keyword>
<keyword id="KW-0903">Direct protein sequencing</keyword>
<keyword id="KW-0325">Glycoprotein</keyword>
<keyword id="KW-0378">Hydrolase</keyword>
<keyword id="KW-0479">Metal-binding</keyword>
<keyword id="KW-0482">Metalloprotease</keyword>
<keyword id="KW-0645">Protease</keyword>
<keyword id="KW-1185">Reference proteome</keyword>
<keyword id="KW-0732">Signal</keyword>
<keyword id="KW-0926">Vacuole</keyword>
<keyword id="KW-0862">Zinc</keyword>
<keyword id="KW-0865">Zymogen</keyword>
<accession>P37302</accession>
<accession>D6VQT1</accession>
<accession>P38154</accession>
<protein>
    <recommendedName>
        <fullName>Aminopeptidase Y</fullName>
        <ecNumber>3.4.11.15</ecNumber>
    </recommendedName>
</protein>
<name>APE3_YEAST</name>
<reference key="1">
    <citation type="journal article" date="1994" name="J. Biol. Chem.">
        <title>Molecular cloning of the aminopeptidase Y gene of Saccharomyces cerevisiae. Sequence analysis and gene disruption of a new aminopeptidase.</title>
        <authorList>
            <person name="Nishizawa M."/>
            <person name="Yasuhara T."/>
            <person name="Nakai T."/>
            <person name="Fujiki Y."/>
            <person name="Ohashi A."/>
        </authorList>
    </citation>
    <scope>NUCLEOTIDE SEQUENCE [GENOMIC DNA]</scope>
    <scope>PROTEIN SEQUENCE OF 57-70</scope>
    <source>
        <strain>ATCC 24657 / D273-10B</strain>
    </source>
</reference>
<reference key="2">
    <citation type="journal article" date="1994" name="Yeast">
        <title>The sequence of a 32,420 bp segment located on the right arm of chromosome II from Saccharomyces cerevisiae.</title>
        <authorList>
            <person name="Holmstroem K."/>
            <person name="Brandt T."/>
            <person name="Kallesoe T."/>
        </authorList>
    </citation>
    <scope>NUCLEOTIDE SEQUENCE [GENOMIC DNA]</scope>
    <source>
        <strain>ATCC 204508 / S288c</strain>
    </source>
</reference>
<reference key="3">
    <citation type="journal article" date="1994" name="EMBO J.">
        <title>Complete DNA sequence of yeast chromosome II.</title>
        <authorList>
            <person name="Feldmann H."/>
            <person name="Aigle M."/>
            <person name="Aljinovic G."/>
            <person name="Andre B."/>
            <person name="Baclet M.C."/>
            <person name="Barthe C."/>
            <person name="Baur A."/>
            <person name="Becam A.-M."/>
            <person name="Biteau N."/>
            <person name="Boles E."/>
            <person name="Brandt T."/>
            <person name="Brendel M."/>
            <person name="Brueckner M."/>
            <person name="Bussereau F."/>
            <person name="Christiansen C."/>
            <person name="Contreras R."/>
            <person name="Crouzet M."/>
            <person name="Cziepluch C."/>
            <person name="Demolis N."/>
            <person name="Delaveau T."/>
            <person name="Doignon F."/>
            <person name="Domdey H."/>
            <person name="Duesterhus S."/>
            <person name="Dubois E."/>
            <person name="Dujon B."/>
            <person name="El Bakkoury M."/>
            <person name="Entian K.-D."/>
            <person name="Feuermann M."/>
            <person name="Fiers W."/>
            <person name="Fobo G.M."/>
            <person name="Fritz C."/>
            <person name="Gassenhuber J."/>
            <person name="Glansdorff N."/>
            <person name="Goffeau A."/>
            <person name="Grivell L.A."/>
            <person name="de Haan M."/>
            <person name="Hein C."/>
            <person name="Herbert C.J."/>
            <person name="Hollenberg C.P."/>
            <person name="Holmstroem K."/>
            <person name="Jacq C."/>
            <person name="Jacquet M."/>
            <person name="Jauniaux J.-C."/>
            <person name="Jonniaux J.-L."/>
            <person name="Kallesoee T."/>
            <person name="Kiesau P."/>
            <person name="Kirchrath L."/>
            <person name="Koetter P."/>
            <person name="Korol S."/>
            <person name="Liebl S."/>
            <person name="Logghe M."/>
            <person name="Lohan A.J.E."/>
            <person name="Louis E.J."/>
            <person name="Li Z.Y."/>
            <person name="Maat M.J."/>
            <person name="Mallet L."/>
            <person name="Mannhaupt G."/>
            <person name="Messenguy F."/>
            <person name="Miosga T."/>
            <person name="Molemans F."/>
            <person name="Mueller S."/>
            <person name="Nasr F."/>
            <person name="Obermaier B."/>
            <person name="Perea J."/>
            <person name="Pierard A."/>
            <person name="Piravandi E."/>
            <person name="Pohl F.M."/>
            <person name="Pohl T.M."/>
            <person name="Potier S."/>
            <person name="Proft M."/>
            <person name="Purnelle B."/>
            <person name="Ramezani Rad M."/>
            <person name="Rieger M."/>
            <person name="Rose M."/>
            <person name="Schaaff-Gerstenschlaeger I."/>
            <person name="Scherens B."/>
            <person name="Schwarzlose C."/>
            <person name="Skala J."/>
            <person name="Slonimski P.P."/>
            <person name="Smits P.H.M."/>
            <person name="Souciet J.-L."/>
            <person name="Steensma H.Y."/>
            <person name="Stucka R."/>
            <person name="Urrestarazu L.A."/>
            <person name="van der Aart Q.J.M."/>
            <person name="Van Dyck L."/>
            <person name="Vassarotti A."/>
            <person name="Vetter I."/>
            <person name="Vierendeels F."/>
            <person name="Vissers S."/>
            <person name="Wagner G."/>
            <person name="de Wergifosse P."/>
            <person name="Wolfe K.H."/>
            <person name="Zagulski M."/>
            <person name="Zimmermann F.K."/>
            <person name="Mewes H.-W."/>
            <person name="Kleine K."/>
        </authorList>
    </citation>
    <scope>NUCLEOTIDE SEQUENCE [LARGE SCALE GENOMIC DNA]</scope>
    <source>
        <strain>ATCC 204508 / S288c</strain>
    </source>
</reference>
<reference key="4">
    <citation type="journal article" date="2014" name="G3 (Bethesda)">
        <title>The reference genome sequence of Saccharomyces cerevisiae: Then and now.</title>
        <authorList>
            <person name="Engel S.R."/>
            <person name="Dietrich F.S."/>
            <person name="Fisk D.G."/>
            <person name="Binkley G."/>
            <person name="Balakrishnan R."/>
            <person name="Costanzo M.C."/>
            <person name="Dwight S.S."/>
            <person name="Hitz B.C."/>
            <person name="Karra K."/>
            <person name="Nash R.S."/>
            <person name="Weng S."/>
            <person name="Wong E.D."/>
            <person name="Lloyd P."/>
            <person name="Skrzypek M.S."/>
            <person name="Miyasato S.R."/>
            <person name="Simison M."/>
            <person name="Cherry J.M."/>
        </authorList>
    </citation>
    <scope>GENOME REANNOTATION</scope>
    <source>
        <strain>ATCC 204508 / S288c</strain>
    </source>
</reference>
<reference key="5">
    <citation type="journal article" date="1994" name="J. Biol. Chem.">
        <title>Aminopeptidase Y, a new aminopeptidase from Saccharomyces cerevisiae. Purification, properties, localization, and processing by protease B.</title>
        <authorList>
            <person name="Yasuhara T."/>
            <person name="Nakai T."/>
            <person name="Ohashi A."/>
        </authorList>
    </citation>
    <scope>PROTEIN SEQUENCE OF 57-70</scope>
    <scope>CHARACTERIZATION</scope>
    <source>
        <strain>D273-1B</strain>
    </source>
</reference>
<reference key="6">
    <citation type="journal article" date="2003" name="Nature">
        <title>Global analysis of protein expression in yeast.</title>
        <authorList>
            <person name="Ghaemmaghami S."/>
            <person name="Huh W.-K."/>
            <person name="Bower K."/>
            <person name="Howson R.W."/>
            <person name="Belle A."/>
            <person name="Dephoure N."/>
            <person name="O'Shea E.K."/>
            <person name="Weissman J.S."/>
        </authorList>
    </citation>
    <scope>LEVEL OF PROTEIN EXPRESSION [LARGE SCALE ANALYSIS]</scope>
</reference>
<organism>
    <name type="scientific">Saccharomyces cerevisiae (strain ATCC 204508 / S288c)</name>
    <name type="common">Baker's yeast</name>
    <dbReference type="NCBI Taxonomy" id="559292"/>
    <lineage>
        <taxon>Eukaryota</taxon>
        <taxon>Fungi</taxon>
        <taxon>Dikarya</taxon>
        <taxon>Ascomycota</taxon>
        <taxon>Saccharomycotina</taxon>
        <taxon>Saccharomycetes</taxon>
        <taxon>Saccharomycetales</taxon>
        <taxon>Saccharomycetaceae</taxon>
        <taxon>Saccharomyces</taxon>
    </lineage>
</organism>
<gene>
    <name type="primary">APE3</name>
    <name type="ordered locus">YBR286W</name>
    <name type="ORF">YBR2024</name>
</gene>
<dbReference type="EC" id="3.4.11.15"/>
<dbReference type="EMBL" id="L31635">
    <property type="protein sequence ID" value="AAA19559.1"/>
    <property type="molecule type" value="Unassigned_DNA"/>
</dbReference>
<dbReference type="EMBL" id="X76053">
    <property type="protein sequence ID" value="CAA53649.1"/>
    <property type="molecule type" value="Genomic_DNA"/>
</dbReference>
<dbReference type="EMBL" id="Z36155">
    <property type="protein sequence ID" value="CAA85251.1"/>
    <property type="molecule type" value="Genomic_DNA"/>
</dbReference>
<dbReference type="EMBL" id="BK006936">
    <property type="protein sequence ID" value="DAA07401.1"/>
    <property type="molecule type" value="Genomic_DNA"/>
</dbReference>
<dbReference type="PIR" id="A54134">
    <property type="entry name" value="A54134"/>
</dbReference>
<dbReference type="RefSeq" id="NP_009845.2">
    <property type="nucleotide sequence ID" value="NM_001178634.1"/>
</dbReference>
<dbReference type="SMR" id="P37302"/>
<dbReference type="BioGRID" id="32980">
    <property type="interactions" value="95"/>
</dbReference>
<dbReference type="DIP" id="DIP-3975N"/>
<dbReference type="FunCoup" id="P37302">
    <property type="interactions" value="74"/>
</dbReference>
<dbReference type="IntAct" id="P37302">
    <property type="interactions" value="13"/>
</dbReference>
<dbReference type="STRING" id="4932.YBR286W"/>
<dbReference type="MEROPS" id="M28.001"/>
<dbReference type="GlyCosmos" id="P37302">
    <property type="glycosylation" value="8 sites, No reported glycans"/>
</dbReference>
<dbReference type="GlyGen" id="P37302">
    <property type="glycosylation" value="8 sites"/>
</dbReference>
<dbReference type="iPTMnet" id="P37302"/>
<dbReference type="PaxDb" id="4932-YBR286W"/>
<dbReference type="PeptideAtlas" id="P37302"/>
<dbReference type="EnsemblFungi" id="YBR286W_mRNA">
    <property type="protein sequence ID" value="YBR286W"/>
    <property type="gene ID" value="YBR286W"/>
</dbReference>
<dbReference type="GeneID" id="852589"/>
<dbReference type="KEGG" id="sce:YBR286W"/>
<dbReference type="AGR" id="SGD:S000000490"/>
<dbReference type="SGD" id="S000000490">
    <property type="gene designation" value="APE3"/>
</dbReference>
<dbReference type="VEuPathDB" id="FungiDB:YBR286W"/>
<dbReference type="eggNOG" id="KOG2195">
    <property type="taxonomic scope" value="Eukaryota"/>
</dbReference>
<dbReference type="HOGENOM" id="CLU_024336_0_1_1"/>
<dbReference type="InParanoid" id="P37302"/>
<dbReference type="OMA" id="PNYEYEV"/>
<dbReference type="OrthoDB" id="10013407at2759"/>
<dbReference type="BioCyc" id="YEAST:YBR286W-MONOMER"/>
<dbReference type="BioGRID-ORCS" id="852589">
    <property type="hits" value="0 hits in 10 CRISPR screens"/>
</dbReference>
<dbReference type="PRO" id="PR:P37302"/>
<dbReference type="Proteomes" id="UP000002311">
    <property type="component" value="Chromosome II"/>
</dbReference>
<dbReference type="RNAct" id="P37302">
    <property type="molecule type" value="protein"/>
</dbReference>
<dbReference type="GO" id="GO:0000324">
    <property type="term" value="C:fungal-type vacuole"/>
    <property type="evidence" value="ECO:0000314"/>
    <property type="project" value="SGD"/>
</dbReference>
<dbReference type="GO" id="GO:0004177">
    <property type="term" value="F:aminopeptidase activity"/>
    <property type="evidence" value="ECO:0000314"/>
    <property type="project" value="SGD"/>
</dbReference>
<dbReference type="GO" id="GO:0046872">
    <property type="term" value="F:metal ion binding"/>
    <property type="evidence" value="ECO:0007669"/>
    <property type="project" value="UniProtKB-KW"/>
</dbReference>
<dbReference type="GO" id="GO:0008235">
    <property type="term" value="F:metalloexopeptidase activity"/>
    <property type="evidence" value="ECO:0007669"/>
    <property type="project" value="InterPro"/>
</dbReference>
<dbReference type="GO" id="GO:0007039">
    <property type="term" value="P:protein catabolic process in the vacuole"/>
    <property type="evidence" value="ECO:0000314"/>
    <property type="project" value="SGD"/>
</dbReference>
<dbReference type="GO" id="GO:0006508">
    <property type="term" value="P:proteolysis"/>
    <property type="evidence" value="ECO:0000318"/>
    <property type="project" value="GO_Central"/>
</dbReference>
<dbReference type="CDD" id="cd03876">
    <property type="entry name" value="M28_SGAP_like"/>
    <property type="match status" value="1"/>
</dbReference>
<dbReference type="CDD" id="cd02130">
    <property type="entry name" value="PA_ScAPY_like"/>
    <property type="match status" value="1"/>
</dbReference>
<dbReference type="FunFam" id="3.40.630.10:FF:000093">
    <property type="entry name" value="Peptide hydrolase"/>
    <property type="match status" value="1"/>
</dbReference>
<dbReference type="Gene3D" id="3.50.30.30">
    <property type="match status" value="1"/>
</dbReference>
<dbReference type="Gene3D" id="3.40.630.10">
    <property type="entry name" value="Zn peptidases"/>
    <property type="match status" value="1"/>
</dbReference>
<dbReference type="InterPro" id="IPR045175">
    <property type="entry name" value="M28_fam"/>
</dbReference>
<dbReference type="InterPro" id="IPR041756">
    <property type="entry name" value="M28_SGAP-like"/>
</dbReference>
<dbReference type="InterPro" id="IPR046450">
    <property type="entry name" value="PA_dom_sf"/>
</dbReference>
<dbReference type="InterPro" id="IPR003137">
    <property type="entry name" value="PA_domain"/>
</dbReference>
<dbReference type="InterPro" id="IPR007484">
    <property type="entry name" value="Peptidase_M28"/>
</dbReference>
<dbReference type="PANTHER" id="PTHR12147:SF17">
    <property type="entry name" value="AMINOPEPTIDASE Y"/>
    <property type="match status" value="1"/>
</dbReference>
<dbReference type="PANTHER" id="PTHR12147">
    <property type="entry name" value="METALLOPEPTIDASE M28 FAMILY MEMBER"/>
    <property type="match status" value="1"/>
</dbReference>
<dbReference type="Pfam" id="PF02225">
    <property type="entry name" value="PA"/>
    <property type="match status" value="1"/>
</dbReference>
<dbReference type="Pfam" id="PF04389">
    <property type="entry name" value="Peptidase_M28"/>
    <property type="match status" value="1"/>
</dbReference>
<dbReference type="SUPFAM" id="SSF52025">
    <property type="entry name" value="PA domain"/>
    <property type="match status" value="1"/>
</dbReference>
<dbReference type="SUPFAM" id="SSF53187">
    <property type="entry name" value="Zn-dependent exopeptidases"/>
    <property type="match status" value="1"/>
</dbReference>
<comment type="catalytic activity">
    <reaction>
        <text>Preferentially, release of N-terminal lysine.</text>
        <dbReference type="EC" id="3.4.11.15"/>
    </reaction>
</comment>
<comment type="cofactor">
    <cofactor evidence="1">
        <name>Zn(2+)</name>
        <dbReference type="ChEBI" id="CHEBI:29105"/>
    </cofactor>
    <text evidence="1">Binds 2 Zn(2+) ions per subunit.</text>
</comment>
<comment type="subunit">
    <text>Monomer.</text>
</comment>
<comment type="subcellular location">
    <subcellularLocation>
        <location>Vacuole</location>
    </subcellularLocation>
    <text>Lysosome-like vacuoles.</text>
</comment>
<comment type="miscellaneous">
    <text evidence="3">Present with 4740 molecules/cell in log phase SD medium.</text>
</comment>
<comment type="similarity">
    <text evidence="4">Belongs to the peptidase M28 family. M28A subfamily.</text>
</comment>